<dbReference type="EMBL" id="AF215079">
    <property type="protein sequence ID" value="AAG60507.1"/>
    <property type="molecule type" value="mRNA"/>
</dbReference>
<dbReference type="ConoServer" id="766">
    <property type="toxin name" value="Vn6.22 precursor"/>
</dbReference>
<dbReference type="GO" id="GO:0005576">
    <property type="term" value="C:extracellular region"/>
    <property type="evidence" value="ECO:0007669"/>
    <property type="project" value="UniProtKB-SubCell"/>
</dbReference>
<dbReference type="GO" id="GO:0008200">
    <property type="term" value="F:ion channel inhibitor activity"/>
    <property type="evidence" value="ECO:0007669"/>
    <property type="project" value="InterPro"/>
</dbReference>
<dbReference type="GO" id="GO:0090729">
    <property type="term" value="F:toxin activity"/>
    <property type="evidence" value="ECO:0007669"/>
    <property type="project" value="UniProtKB-KW"/>
</dbReference>
<dbReference type="InterPro" id="IPR004214">
    <property type="entry name" value="Conotoxin"/>
</dbReference>
<dbReference type="Pfam" id="PF02950">
    <property type="entry name" value="Conotoxin"/>
    <property type="match status" value="1"/>
</dbReference>
<accession>Q9BP59</accession>
<feature type="signal peptide" evidence="2">
    <location>
        <begin position="1"/>
        <end position="20"/>
    </location>
</feature>
<feature type="propeptide" id="PRO_0000404850" evidence="1">
    <location>
        <begin position="21"/>
        <end position="44"/>
    </location>
</feature>
<feature type="peptide" id="PRO_0000404851" description="Conotoxin VnMSGL-0123">
    <location>
        <begin position="47"/>
        <end position="79"/>
    </location>
</feature>
<feature type="modified residue" description="Phenylalanine amide" evidence="1">
    <location>
        <position position="79"/>
    </location>
</feature>
<feature type="disulfide bond" evidence="1">
    <location>
        <begin position="53"/>
        <end position="65"/>
    </location>
</feature>
<feature type="disulfide bond" evidence="1">
    <location>
        <begin position="57"/>
        <end position="74"/>
    </location>
</feature>
<feature type="disulfide bond" evidence="1">
    <location>
        <begin position="64"/>
        <end position="78"/>
    </location>
</feature>
<comment type="subcellular location">
    <subcellularLocation>
        <location evidence="1">Secreted</location>
    </subcellularLocation>
</comment>
<comment type="tissue specificity">
    <text>Expressed by the venom duct.</text>
</comment>
<comment type="domain">
    <text evidence="1">The presence of a 'disulfide through disulfide knot' structurally defines this protein as a knottin.</text>
</comment>
<comment type="domain">
    <text>The cysteine framework is VI/VII (C-C-CC-C-C).</text>
</comment>
<comment type="similarity">
    <text evidence="3">Belongs to the conotoxin O3 superfamily.</text>
</comment>
<proteinExistence type="evidence at transcript level"/>
<reference key="1">
    <citation type="journal article" date="2001" name="Mol. Biol. Evol.">
        <title>Mechanisms for evolving hypervariability: the case of conopeptides.</title>
        <authorList>
            <person name="Conticello S.G."/>
            <person name="Gilad Y."/>
            <person name="Avidan N."/>
            <person name="Ben-Asher E."/>
            <person name="Levy Z."/>
            <person name="Fainzilber M."/>
        </authorList>
    </citation>
    <scope>NUCLEOTIDE SEQUENCE [MRNA]</scope>
    <source>
        <tissue>Venom duct</tissue>
    </source>
</reference>
<organism>
    <name type="scientific">Conus ventricosus</name>
    <name type="common">Mediterranean cone</name>
    <dbReference type="NCBI Taxonomy" id="117992"/>
    <lineage>
        <taxon>Eukaryota</taxon>
        <taxon>Metazoa</taxon>
        <taxon>Spiralia</taxon>
        <taxon>Lophotrochozoa</taxon>
        <taxon>Mollusca</taxon>
        <taxon>Gastropoda</taxon>
        <taxon>Caenogastropoda</taxon>
        <taxon>Neogastropoda</taxon>
        <taxon>Conoidea</taxon>
        <taxon>Conidae</taxon>
        <taxon>Conus</taxon>
        <taxon>Lautoconus</taxon>
    </lineage>
</organism>
<protein>
    <recommendedName>
        <fullName>Conotoxin VnMSGL-0123</fullName>
    </recommendedName>
</protein>
<evidence type="ECO:0000250" key="1"/>
<evidence type="ECO:0000255" key="2"/>
<evidence type="ECO:0000305" key="3"/>
<name>O3622_CONVE</name>
<keyword id="KW-0027">Amidation</keyword>
<keyword id="KW-0165">Cleavage on pair of basic residues</keyword>
<keyword id="KW-1015">Disulfide bond</keyword>
<keyword id="KW-0960">Knottin</keyword>
<keyword id="KW-0528">Neurotoxin</keyword>
<keyword id="KW-0964">Secreted</keyword>
<keyword id="KW-0732">Signal</keyword>
<keyword id="KW-0800">Toxin</keyword>
<sequence>MSGLGIMVLTLLLLVSMATSHQDGGGKQATQRDAINVRRRRSITRREVVTEECEEYCKEQNKTCCGLTNGRPRCVGVCFG</sequence>